<feature type="chain" id="PRO_1000131977" description="Aspartate/glutamate leucyltransferase">
    <location>
        <begin position="1"/>
        <end position="273"/>
    </location>
</feature>
<organism>
    <name type="scientific">Paraburkholderia phytofirmans (strain DSM 17436 / LMG 22146 / PsJN)</name>
    <name type="common">Burkholderia phytofirmans</name>
    <dbReference type="NCBI Taxonomy" id="398527"/>
    <lineage>
        <taxon>Bacteria</taxon>
        <taxon>Pseudomonadati</taxon>
        <taxon>Pseudomonadota</taxon>
        <taxon>Betaproteobacteria</taxon>
        <taxon>Burkholderiales</taxon>
        <taxon>Burkholderiaceae</taxon>
        <taxon>Paraburkholderia</taxon>
    </lineage>
</organism>
<protein>
    <recommendedName>
        <fullName evidence="1">Aspartate/glutamate leucyltransferase</fullName>
        <ecNumber evidence="1">2.3.2.29</ecNumber>
    </recommendedName>
</protein>
<sequence length="273" mass="31210">MTHPNELPLSPLSALQFYATAPYPCSYLDGRIARSQVATPSHLINSDVYTDLVKAGFRRSGVFTYRPYCDGCRACVPVRVPVDQFEPNRTQRRVWKKHGELIATVAPLHYDEEHYALYMRYQSARHAGGGMDRDSRDQYEQFLLQSRINSRLVEFREPLRDQADAPGILRMISMIDILGDGLSSVYTFFEPGLPNTSFGTYNIYWQIEQARSLKLPYVYLGYWIRESPKMAYKANFRPLEGLIDGAWCVLDPTSVDLPPVDLAIHGKRPPLKP</sequence>
<proteinExistence type="inferred from homology"/>
<comment type="function">
    <text evidence="1">Functions in the N-end rule pathway of protein degradation where it conjugates Leu from its aminoacyl-tRNA to the N-termini of proteins containing an N-terminal aspartate or glutamate.</text>
</comment>
<comment type="catalytic activity">
    <reaction evidence="1">
        <text>N-terminal L-glutamyl-[protein] + L-leucyl-tRNA(Leu) = N-terminal L-leucyl-L-glutamyl-[protein] + tRNA(Leu) + H(+)</text>
        <dbReference type="Rhea" id="RHEA:50412"/>
        <dbReference type="Rhea" id="RHEA-COMP:9613"/>
        <dbReference type="Rhea" id="RHEA-COMP:9622"/>
        <dbReference type="Rhea" id="RHEA-COMP:12664"/>
        <dbReference type="Rhea" id="RHEA-COMP:12668"/>
        <dbReference type="ChEBI" id="CHEBI:15378"/>
        <dbReference type="ChEBI" id="CHEBI:64721"/>
        <dbReference type="ChEBI" id="CHEBI:78442"/>
        <dbReference type="ChEBI" id="CHEBI:78494"/>
        <dbReference type="ChEBI" id="CHEBI:133041"/>
        <dbReference type="EC" id="2.3.2.29"/>
    </reaction>
</comment>
<comment type="catalytic activity">
    <reaction evidence="1">
        <text>N-terminal L-aspartyl-[protein] + L-leucyl-tRNA(Leu) = N-terminal L-leucyl-L-aspartyl-[protein] + tRNA(Leu) + H(+)</text>
        <dbReference type="Rhea" id="RHEA:50420"/>
        <dbReference type="Rhea" id="RHEA-COMP:9613"/>
        <dbReference type="Rhea" id="RHEA-COMP:9622"/>
        <dbReference type="Rhea" id="RHEA-COMP:12669"/>
        <dbReference type="Rhea" id="RHEA-COMP:12674"/>
        <dbReference type="ChEBI" id="CHEBI:15378"/>
        <dbReference type="ChEBI" id="CHEBI:64720"/>
        <dbReference type="ChEBI" id="CHEBI:78442"/>
        <dbReference type="ChEBI" id="CHEBI:78494"/>
        <dbReference type="ChEBI" id="CHEBI:133042"/>
        <dbReference type="EC" id="2.3.2.29"/>
    </reaction>
</comment>
<comment type="subcellular location">
    <subcellularLocation>
        <location evidence="1">Cytoplasm</location>
    </subcellularLocation>
</comment>
<comment type="similarity">
    <text evidence="1">Belongs to the R-transferase family. Bpt subfamily.</text>
</comment>
<keyword id="KW-0012">Acyltransferase</keyword>
<keyword id="KW-0963">Cytoplasm</keyword>
<keyword id="KW-0808">Transferase</keyword>
<name>BPT_PARPJ</name>
<reference key="1">
    <citation type="journal article" date="2011" name="J. Bacteriol.">
        <title>Complete genome sequence of the plant growth-promoting endophyte Burkholderia phytofirmans strain PsJN.</title>
        <authorList>
            <person name="Weilharter A."/>
            <person name="Mitter B."/>
            <person name="Shin M.V."/>
            <person name="Chain P.S."/>
            <person name="Nowak J."/>
            <person name="Sessitsch A."/>
        </authorList>
    </citation>
    <scope>NUCLEOTIDE SEQUENCE [LARGE SCALE GENOMIC DNA]</scope>
    <source>
        <strain>DSM 17436 / LMG 22146 / PsJN</strain>
    </source>
</reference>
<accession>B2T3H8</accession>
<evidence type="ECO:0000255" key="1">
    <source>
        <dbReference type="HAMAP-Rule" id="MF_00689"/>
    </source>
</evidence>
<gene>
    <name evidence="1" type="primary">bpt</name>
    <name type="ordered locus">Bphyt_1731</name>
</gene>
<dbReference type="EC" id="2.3.2.29" evidence="1"/>
<dbReference type="EMBL" id="CP001052">
    <property type="protein sequence ID" value="ACD16139.1"/>
    <property type="molecule type" value="Genomic_DNA"/>
</dbReference>
<dbReference type="RefSeq" id="WP_012432748.1">
    <property type="nucleotide sequence ID" value="NC_010681.1"/>
</dbReference>
<dbReference type="SMR" id="B2T3H8"/>
<dbReference type="STRING" id="398527.Bphyt_1731"/>
<dbReference type="KEGG" id="bpy:Bphyt_1731"/>
<dbReference type="eggNOG" id="COG2935">
    <property type="taxonomic scope" value="Bacteria"/>
</dbReference>
<dbReference type="HOGENOM" id="CLU_077607_0_0_4"/>
<dbReference type="OrthoDB" id="9782022at2"/>
<dbReference type="Proteomes" id="UP000001739">
    <property type="component" value="Chromosome 1"/>
</dbReference>
<dbReference type="GO" id="GO:0005737">
    <property type="term" value="C:cytoplasm"/>
    <property type="evidence" value="ECO:0007669"/>
    <property type="project" value="UniProtKB-SubCell"/>
</dbReference>
<dbReference type="GO" id="GO:0004057">
    <property type="term" value="F:arginyl-tRNA--protein transferase activity"/>
    <property type="evidence" value="ECO:0007669"/>
    <property type="project" value="InterPro"/>
</dbReference>
<dbReference type="GO" id="GO:0008914">
    <property type="term" value="F:leucyl-tRNA--protein transferase activity"/>
    <property type="evidence" value="ECO:0007669"/>
    <property type="project" value="UniProtKB-UniRule"/>
</dbReference>
<dbReference type="GO" id="GO:0071596">
    <property type="term" value="P:ubiquitin-dependent protein catabolic process via the N-end rule pathway"/>
    <property type="evidence" value="ECO:0007669"/>
    <property type="project" value="InterPro"/>
</dbReference>
<dbReference type="HAMAP" id="MF_00689">
    <property type="entry name" value="Bpt"/>
    <property type="match status" value="1"/>
</dbReference>
<dbReference type="InterPro" id="IPR016181">
    <property type="entry name" value="Acyl_CoA_acyltransferase"/>
</dbReference>
<dbReference type="InterPro" id="IPR017138">
    <property type="entry name" value="Asp_Glu_LeuTrfase"/>
</dbReference>
<dbReference type="InterPro" id="IPR030700">
    <property type="entry name" value="N-end_Aminoacyl_Trfase"/>
</dbReference>
<dbReference type="InterPro" id="IPR007472">
    <property type="entry name" value="N-end_Aminoacyl_Trfase_C"/>
</dbReference>
<dbReference type="InterPro" id="IPR007471">
    <property type="entry name" value="N-end_Aminoacyl_Trfase_N"/>
</dbReference>
<dbReference type="NCBIfam" id="NF002341">
    <property type="entry name" value="PRK01305.1-1"/>
    <property type="match status" value="1"/>
</dbReference>
<dbReference type="NCBIfam" id="NF002342">
    <property type="entry name" value="PRK01305.1-3"/>
    <property type="match status" value="1"/>
</dbReference>
<dbReference type="NCBIfam" id="NF002346">
    <property type="entry name" value="PRK01305.2-3"/>
    <property type="match status" value="1"/>
</dbReference>
<dbReference type="PANTHER" id="PTHR21367">
    <property type="entry name" value="ARGININE-TRNA-PROTEIN TRANSFERASE 1"/>
    <property type="match status" value="1"/>
</dbReference>
<dbReference type="PANTHER" id="PTHR21367:SF1">
    <property type="entry name" value="ARGINYL-TRNA--PROTEIN TRANSFERASE 1"/>
    <property type="match status" value="1"/>
</dbReference>
<dbReference type="Pfam" id="PF04377">
    <property type="entry name" value="ATE_C"/>
    <property type="match status" value="1"/>
</dbReference>
<dbReference type="Pfam" id="PF04376">
    <property type="entry name" value="ATE_N"/>
    <property type="match status" value="1"/>
</dbReference>
<dbReference type="PIRSF" id="PIRSF037208">
    <property type="entry name" value="ATE_pro_prd"/>
    <property type="match status" value="1"/>
</dbReference>
<dbReference type="SUPFAM" id="SSF55729">
    <property type="entry name" value="Acyl-CoA N-acyltransferases (Nat)"/>
    <property type="match status" value="1"/>
</dbReference>